<reference key="1">
    <citation type="journal article" date="1998" name="J. Mol. Evol.">
        <title>Conflict among individual mitochondrial proteins in resolving the phylogeny of eutherian orders.</title>
        <authorList>
            <person name="Cao Y."/>
            <person name="Janke A."/>
            <person name="Waddell P.J."/>
            <person name="Westerman M."/>
            <person name="Takenaka O."/>
            <person name="Murata S."/>
            <person name="Okada N."/>
            <person name="Paeaebo S."/>
            <person name="Hasegawa M."/>
        </authorList>
    </citation>
    <scope>NUCLEOTIDE SEQUENCE [GENOMIC DNA]</scope>
    <source>
        <tissue>Liver</tissue>
    </source>
</reference>
<accession>O78708</accession>
<feature type="chain" id="PRO_0000117498" description="NADH-ubiquinone oxidoreductase chain 1">
    <location>
        <begin position="1"/>
        <end position="318"/>
    </location>
</feature>
<feature type="transmembrane region" description="Helical" evidence="2">
    <location>
        <begin position="2"/>
        <end position="22"/>
    </location>
</feature>
<feature type="transmembrane region" description="Helical" evidence="2">
    <location>
        <begin position="68"/>
        <end position="88"/>
    </location>
</feature>
<feature type="transmembrane region" description="Helical" evidence="2">
    <location>
        <begin position="100"/>
        <end position="120"/>
    </location>
</feature>
<feature type="transmembrane region" description="Helical" evidence="2">
    <location>
        <begin position="136"/>
        <end position="156"/>
    </location>
</feature>
<feature type="transmembrane region" description="Helical" evidence="2">
    <location>
        <begin position="172"/>
        <end position="192"/>
    </location>
</feature>
<feature type="transmembrane region" description="Helical" evidence="2">
    <location>
        <begin position="223"/>
        <end position="243"/>
    </location>
</feature>
<feature type="transmembrane region" description="Helical" evidence="2">
    <location>
        <begin position="253"/>
        <end position="273"/>
    </location>
</feature>
<feature type="transmembrane region" description="Helical" evidence="2">
    <location>
        <begin position="294"/>
        <end position="314"/>
    </location>
</feature>
<organism>
    <name type="scientific">Vombatus ursinus</name>
    <name type="common">Common wombat</name>
    <dbReference type="NCBI Taxonomy" id="29139"/>
    <lineage>
        <taxon>Eukaryota</taxon>
        <taxon>Metazoa</taxon>
        <taxon>Chordata</taxon>
        <taxon>Craniata</taxon>
        <taxon>Vertebrata</taxon>
        <taxon>Euteleostomi</taxon>
        <taxon>Mammalia</taxon>
        <taxon>Metatheria</taxon>
        <taxon>Diprotodontia</taxon>
        <taxon>Vombatidae</taxon>
        <taxon>Vombatus</taxon>
    </lineage>
</organism>
<name>NU1M_VOMUR</name>
<sequence>MFIINLLLYIVPILLAVAFLTLVERKVLGYMQFRKGPNIVGPYGLLQPIADAVKLFTKEPLRPLTSSISMFIIAPILALTIALTIWTPLPMPHTLIDLNLGLLFILALSGLSVYSILWSGWASNSKYALIGALRAVAQTISYEVTLAIILLSIMLINGSFTLKNLIITQENMELIVTTWPLAMMWYVSTLAETNRAPFDLTEGESELVSGFNVEYAAGPFAMFFLAEYANIMVMNAMTTILFLGSSLNHNFTHLNTLSFMTKTLALTLLFLWIRASYPRFRYDQLMHLLWKSFLPITLALCLWFISIPVALSCIPPQL</sequence>
<dbReference type="EC" id="7.1.1.2"/>
<dbReference type="EMBL" id="AB011225">
    <property type="protein sequence ID" value="BAA32117.1"/>
    <property type="molecule type" value="Genomic_DNA"/>
</dbReference>
<dbReference type="SMR" id="O78708"/>
<dbReference type="STRING" id="29139.ENSVURP00010032878"/>
<dbReference type="Proteomes" id="UP000314987">
    <property type="component" value="Unassembled WGS sequence"/>
</dbReference>
<dbReference type="GO" id="GO:0005743">
    <property type="term" value="C:mitochondrial inner membrane"/>
    <property type="evidence" value="ECO:0007669"/>
    <property type="project" value="UniProtKB-SubCell"/>
</dbReference>
<dbReference type="GO" id="GO:0008137">
    <property type="term" value="F:NADH dehydrogenase (ubiquinone) activity"/>
    <property type="evidence" value="ECO:0007669"/>
    <property type="project" value="UniProtKB-EC"/>
</dbReference>
<dbReference type="GO" id="GO:0009060">
    <property type="term" value="P:aerobic respiration"/>
    <property type="evidence" value="ECO:0007669"/>
    <property type="project" value="TreeGrafter"/>
</dbReference>
<dbReference type="HAMAP" id="MF_01350">
    <property type="entry name" value="NDH1_NuoH"/>
    <property type="match status" value="1"/>
</dbReference>
<dbReference type="InterPro" id="IPR001694">
    <property type="entry name" value="NADH_UbQ_OxRdtase_su1/FPO"/>
</dbReference>
<dbReference type="InterPro" id="IPR018086">
    <property type="entry name" value="NADH_UbQ_OxRdtase_su1_CS"/>
</dbReference>
<dbReference type="PANTHER" id="PTHR11432">
    <property type="entry name" value="NADH DEHYDROGENASE SUBUNIT 1"/>
    <property type="match status" value="1"/>
</dbReference>
<dbReference type="PANTHER" id="PTHR11432:SF3">
    <property type="entry name" value="NADH-UBIQUINONE OXIDOREDUCTASE CHAIN 1"/>
    <property type="match status" value="1"/>
</dbReference>
<dbReference type="Pfam" id="PF00146">
    <property type="entry name" value="NADHdh"/>
    <property type="match status" value="1"/>
</dbReference>
<dbReference type="PROSITE" id="PS00667">
    <property type="entry name" value="COMPLEX1_ND1_1"/>
    <property type="match status" value="1"/>
</dbReference>
<dbReference type="PROSITE" id="PS00668">
    <property type="entry name" value="COMPLEX1_ND1_2"/>
    <property type="match status" value="1"/>
</dbReference>
<protein>
    <recommendedName>
        <fullName>NADH-ubiquinone oxidoreductase chain 1</fullName>
        <ecNumber>7.1.1.2</ecNumber>
    </recommendedName>
    <alternativeName>
        <fullName>NADH dehydrogenase subunit 1</fullName>
    </alternativeName>
</protein>
<comment type="function">
    <text evidence="1">Core subunit of the mitochondrial membrane respiratory chain NADH dehydrogenase (Complex I) that is believed to belong to the minimal assembly required for catalysis. Complex I functions in the transfer of electrons from NADH to the respiratory chain. The immediate electron acceptor for the enzyme is believed to be ubiquinone (By similarity).</text>
</comment>
<comment type="catalytic activity">
    <reaction>
        <text>a ubiquinone + NADH + 5 H(+)(in) = a ubiquinol + NAD(+) + 4 H(+)(out)</text>
        <dbReference type="Rhea" id="RHEA:29091"/>
        <dbReference type="Rhea" id="RHEA-COMP:9565"/>
        <dbReference type="Rhea" id="RHEA-COMP:9566"/>
        <dbReference type="ChEBI" id="CHEBI:15378"/>
        <dbReference type="ChEBI" id="CHEBI:16389"/>
        <dbReference type="ChEBI" id="CHEBI:17976"/>
        <dbReference type="ChEBI" id="CHEBI:57540"/>
        <dbReference type="ChEBI" id="CHEBI:57945"/>
        <dbReference type="EC" id="7.1.1.2"/>
    </reaction>
</comment>
<comment type="subcellular location">
    <subcellularLocation>
        <location evidence="1">Mitochondrion inner membrane</location>
        <topology evidence="1">Multi-pass membrane protein</topology>
    </subcellularLocation>
</comment>
<comment type="similarity">
    <text evidence="3">Belongs to the complex I subunit 1 family.</text>
</comment>
<proteinExistence type="inferred from homology"/>
<keyword id="KW-0249">Electron transport</keyword>
<keyword id="KW-0472">Membrane</keyword>
<keyword id="KW-0496">Mitochondrion</keyword>
<keyword id="KW-0999">Mitochondrion inner membrane</keyword>
<keyword id="KW-0520">NAD</keyword>
<keyword id="KW-1185">Reference proteome</keyword>
<keyword id="KW-0679">Respiratory chain</keyword>
<keyword id="KW-1278">Translocase</keyword>
<keyword id="KW-0812">Transmembrane</keyword>
<keyword id="KW-1133">Transmembrane helix</keyword>
<keyword id="KW-0813">Transport</keyword>
<keyword id="KW-0830">Ubiquinone</keyword>
<geneLocation type="mitochondrion"/>
<gene>
    <name type="primary">MT-ND1</name>
    <name type="synonym">MTND1</name>
    <name type="synonym">NADH1</name>
    <name type="synonym">ND1</name>
</gene>
<evidence type="ECO:0000250" key="1"/>
<evidence type="ECO:0000255" key="2"/>
<evidence type="ECO:0000305" key="3"/>